<organism>
    <name type="scientific">Brucella melitensis biotype 2 (strain ATCC 23457)</name>
    <dbReference type="NCBI Taxonomy" id="546272"/>
    <lineage>
        <taxon>Bacteria</taxon>
        <taxon>Pseudomonadati</taxon>
        <taxon>Pseudomonadota</taxon>
        <taxon>Alphaproteobacteria</taxon>
        <taxon>Hyphomicrobiales</taxon>
        <taxon>Brucellaceae</taxon>
        <taxon>Brucella/Ochrobactrum group</taxon>
        <taxon>Brucella</taxon>
    </lineage>
</organism>
<evidence type="ECO:0000255" key="1">
    <source>
        <dbReference type="HAMAP-Rule" id="MF_00154"/>
    </source>
</evidence>
<comment type="function">
    <text evidence="1">Converts heme B (protoheme IX) to heme O by substitution of the vinyl group on carbon 2 of heme B porphyrin ring with a hydroxyethyl farnesyl side group.</text>
</comment>
<comment type="catalytic activity">
    <reaction evidence="1">
        <text>heme b + (2E,6E)-farnesyl diphosphate + H2O = Fe(II)-heme o + diphosphate</text>
        <dbReference type="Rhea" id="RHEA:28070"/>
        <dbReference type="ChEBI" id="CHEBI:15377"/>
        <dbReference type="ChEBI" id="CHEBI:33019"/>
        <dbReference type="ChEBI" id="CHEBI:60344"/>
        <dbReference type="ChEBI" id="CHEBI:60530"/>
        <dbReference type="ChEBI" id="CHEBI:175763"/>
        <dbReference type="EC" id="2.5.1.141"/>
    </reaction>
</comment>
<comment type="pathway">
    <text evidence="1">Porphyrin-containing compound metabolism; heme O biosynthesis; heme O from protoheme: step 1/1.</text>
</comment>
<comment type="subcellular location">
    <subcellularLocation>
        <location evidence="1">Cell inner membrane</location>
        <topology evidence="1">Multi-pass membrane protein</topology>
    </subcellularLocation>
</comment>
<comment type="miscellaneous">
    <text evidence="1">Carbon 2 of the heme B porphyrin ring is defined according to the Fischer nomenclature.</text>
</comment>
<comment type="similarity">
    <text evidence="1">Belongs to the UbiA prenyltransferase family. Protoheme IX farnesyltransferase subfamily.</text>
</comment>
<name>COXX_BRUMB</name>
<accession>C0RHH6</accession>
<gene>
    <name evidence="1" type="primary">ctaB</name>
    <name type="ordered locus">BMEA_A0505</name>
</gene>
<keyword id="KW-0997">Cell inner membrane</keyword>
<keyword id="KW-1003">Cell membrane</keyword>
<keyword id="KW-0350">Heme biosynthesis</keyword>
<keyword id="KW-0472">Membrane</keyword>
<keyword id="KW-0808">Transferase</keyword>
<keyword id="KW-0812">Transmembrane</keyword>
<keyword id="KW-1133">Transmembrane helix</keyword>
<sequence>MSLVEKNTASEDAFALSEATARDYLVLLKPRVMSLVVFTGLVGLVLAPGHMNPVLAVISILCIAVGAGASGALNMWYDADIDAVMKRTRKRPIPAGIIAPNQVLAFGLTLSAFSVMTLGLMVNWLAAALLAFTIFFYAVIYTMWLKRSTPQNIVIGGAAGAFPPMIGWAAATGEITWDSLVLFMIIFLWTPPHFWALSLFTTNDYEAARIPMMPNVKGELSTRRQALFYAVLMAPVGVLPWVMGFAGMFYGVVSTLLGLAFVYYAWRLWAADSQPQMLAAARKLFRFSLLYLAGIFAVLLFEALTFKLLAAFGVF</sequence>
<protein>
    <recommendedName>
        <fullName evidence="1">Protoheme IX farnesyltransferase</fullName>
        <ecNumber evidence="1">2.5.1.141</ecNumber>
    </recommendedName>
    <alternativeName>
        <fullName evidence="1">Heme B farnesyltransferase</fullName>
    </alternativeName>
    <alternativeName>
        <fullName evidence="1">Heme O synthase</fullName>
    </alternativeName>
</protein>
<reference key="1">
    <citation type="submission" date="2009-03" db="EMBL/GenBank/DDBJ databases">
        <title>Brucella melitensis ATCC 23457 whole genome shotgun sequencing project.</title>
        <authorList>
            <person name="Setubal J.C."/>
            <person name="Boyle S."/>
            <person name="Crasta O.R."/>
            <person name="Gillespie J.J."/>
            <person name="Kenyon R.W."/>
            <person name="Lu J."/>
            <person name="Mane S."/>
            <person name="Nagrani S."/>
            <person name="Shallom J.M."/>
            <person name="Shallom S."/>
            <person name="Shukla M."/>
            <person name="Snyder E.E."/>
            <person name="Sobral B.W."/>
            <person name="Wattam A.R."/>
            <person name="Will R."/>
            <person name="Williams K."/>
            <person name="Yoo H."/>
            <person name="Munk C."/>
            <person name="Tapia R."/>
            <person name="Han C."/>
            <person name="Detter J.C."/>
            <person name="Bruce D."/>
            <person name="Brettin T.S."/>
        </authorList>
    </citation>
    <scope>NUCLEOTIDE SEQUENCE [LARGE SCALE GENOMIC DNA]</scope>
    <source>
        <strain>ATCC 23457</strain>
    </source>
</reference>
<proteinExistence type="inferred from homology"/>
<dbReference type="EC" id="2.5.1.141" evidence="1"/>
<dbReference type="EMBL" id="CP001488">
    <property type="protein sequence ID" value="ACO00284.1"/>
    <property type="molecule type" value="Genomic_DNA"/>
</dbReference>
<dbReference type="RefSeq" id="WP_004683128.1">
    <property type="nucleotide sequence ID" value="NC_012441.1"/>
</dbReference>
<dbReference type="SMR" id="C0RHH6"/>
<dbReference type="KEGG" id="bmi:BMEA_A0505"/>
<dbReference type="HOGENOM" id="CLU_029631_0_2_5"/>
<dbReference type="UniPathway" id="UPA00834">
    <property type="reaction ID" value="UER00712"/>
</dbReference>
<dbReference type="Proteomes" id="UP000001748">
    <property type="component" value="Chromosome I"/>
</dbReference>
<dbReference type="GO" id="GO:0005886">
    <property type="term" value="C:plasma membrane"/>
    <property type="evidence" value="ECO:0007669"/>
    <property type="project" value="UniProtKB-SubCell"/>
</dbReference>
<dbReference type="GO" id="GO:0008495">
    <property type="term" value="F:protoheme IX farnesyltransferase activity"/>
    <property type="evidence" value="ECO:0007669"/>
    <property type="project" value="UniProtKB-UniRule"/>
</dbReference>
<dbReference type="GO" id="GO:0048034">
    <property type="term" value="P:heme O biosynthetic process"/>
    <property type="evidence" value="ECO:0007669"/>
    <property type="project" value="UniProtKB-UniRule"/>
</dbReference>
<dbReference type="CDD" id="cd13957">
    <property type="entry name" value="PT_UbiA_Cox10"/>
    <property type="match status" value="1"/>
</dbReference>
<dbReference type="FunFam" id="1.10.357.140:FF:000001">
    <property type="entry name" value="Protoheme IX farnesyltransferase"/>
    <property type="match status" value="1"/>
</dbReference>
<dbReference type="Gene3D" id="1.10.357.140">
    <property type="entry name" value="UbiA prenyltransferase"/>
    <property type="match status" value="1"/>
</dbReference>
<dbReference type="HAMAP" id="MF_00154">
    <property type="entry name" value="CyoE_CtaB"/>
    <property type="match status" value="1"/>
</dbReference>
<dbReference type="InterPro" id="IPR006369">
    <property type="entry name" value="Protohaem_IX_farnesylTrfase"/>
</dbReference>
<dbReference type="InterPro" id="IPR000537">
    <property type="entry name" value="UbiA_prenyltransferase"/>
</dbReference>
<dbReference type="InterPro" id="IPR030470">
    <property type="entry name" value="UbiA_prenylTrfase_CS"/>
</dbReference>
<dbReference type="InterPro" id="IPR044878">
    <property type="entry name" value="UbiA_sf"/>
</dbReference>
<dbReference type="NCBIfam" id="TIGR01473">
    <property type="entry name" value="cyoE_ctaB"/>
    <property type="match status" value="1"/>
</dbReference>
<dbReference type="NCBIfam" id="NF003349">
    <property type="entry name" value="PRK04375.1-2"/>
    <property type="match status" value="1"/>
</dbReference>
<dbReference type="PANTHER" id="PTHR43448:SF7">
    <property type="entry name" value="4-HYDROXYBENZOATE SOLANESYLTRANSFERASE"/>
    <property type="match status" value="1"/>
</dbReference>
<dbReference type="PANTHER" id="PTHR43448">
    <property type="entry name" value="PROTOHEME IX FARNESYLTRANSFERASE, MITOCHONDRIAL"/>
    <property type="match status" value="1"/>
</dbReference>
<dbReference type="Pfam" id="PF01040">
    <property type="entry name" value="UbiA"/>
    <property type="match status" value="1"/>
</dbReference>
<dbReference type="PROSITE" id="PS00943">
    <property type="entry name" value="UBIA"/>
    <property type="match status" value="1"/>
</dbReference>
<feature type="chain" id="PRO_1000199645" description="Protoheme IX farnesyltransferase">
    <location>
        <begin position="1"/>
        <end position="315"/>
    </location>
</feature>
<feature type="transmembrane region" description="Helical" evidence="1">
    <location>
        <begin position="32"/>
        <end position="52"/>
    </location>
</feature>
<feature type="transmembrane region" description="Helical" evidence="1">
    <location>
        <begin position="53"/>
        <end position="73"/>
    </location>
</feature>
<feature type="transmembrane region" description="Helical" evidence="1">
    <location>
        <begin position="93"/>
        <end position="113"/>
    </location>
</feature>
<feature type="transmembrane region" description="Helical" evidence="1">
    <location>
        <begin position="120"/>
        <end position="140"/>
    </location>
</feature>
<feature type="transmembrane region" description="Helical" evidence="1">
    <location>
        <begin position="153"/>
        <end position="173"/>
    </location>
</feature>
<feature type="transmembrane region" description="Helical" evidence="1">
    <location>
        <begin position="180"/>
        <end position="200"/>
    </location>
</feature>
<feature type="transmembrane region" description="Helical" evidence="1">
    <location>
        <begin position="226"/>
        <end position="246"/>
    </location>
</feature>
<feature type="transmembrane region" description="Helical" evidence="1">
    <location>
        <begin position="249"/>
        <end position="269"/>
    </location>
</feature>
<feature type="transmembrane region" description="Helical" evidence="1">
    <location>
        <begin position="295"/>
        <end position="315"/>
    </location>
</feature>